<proteinExistence type="inferred from homology"/>
<sequence length="263" mass="28423">MRRQEAGTSSLATRVGPEVLTTAAVASVTGCDDPLAAVLLGRPKVIEVLQRSAELIDRVPALAAAHHQIADYHAMRSRFFDAYLADAAAEGIRQCVVLAAGLDTRAFRLPWPDGMTVFEIDQPTVLRYKENALTAHGARPAAAWHPVGVESDMPWPRRLWESGFNHNEPTIWLAEGLLPLPDATQDALISEIDGLSAAGSRIAFDDVLGMCSGRSDAPGWLTSRGWWTDVVEARHLPGLSGRRDDDAQSYTAHAALVTAEKIA</sequence>
<reference key="1">
    <citation type="submission" date="2007-02" db="EMBL/GenBank/DDBJ databases">
        <title>Complete sequence of Mycobacterium sp. JLS.</title>
        <authorList>
            <consortium name="US DOE Joint Genome Institute"/>
            <person name="Copeland A."/>
            <person name="Lucas S."/>
            <person name="Lapidus A."/>
            <person name="Barry K."/>
            <person name="Detter J.C."/>
            <person name="Glavina del Rio T."/>
            <person name="Hammon N."/>
            <person name="Israni S."/>
            <person name="Dalin E."/>
            <person name="Tice H."/>
            <person name="Pitluck S."/>
            <person name="Chain P."/>
            <person name="Malfatti S."/>
            <person name="Shin M."/>
            <person name="Vergez L."/>
            <person name="Schmutz J."/>
            <person name="Larimer F."/>
            <person name="Land M."/>
            <person name="Hauser L."/>
            <person name="Kyrpides N."/>
            <person name="Mikhailova N."/>
            <person name="Miller C.D."/>
            <person name="Anderson A.J."/>
            <person name="Sims R.C."/>
            <person name="Richardson P."/>
        </authorList>
    </citation>
    <scope>NUCLEOTIDE SEQUENCE [LARGE SCALE GENOMIC DNA]</scope>
    <source>
        <strain>JLS</strain>
    </source>
</reference>
<name>Y079_MYCSJ</name>
<accession>A3PSL5</accession>
<organism>
    <name type="scientific">Mycobacterium sp. (strain JLS)</name>
    <dbReference type="NCBI Taxonomy" id="164757"/>
    <lineage>
        <taxon>Bacteria</taxon>
        <taxon>Bacillati</taxon>
        <taxon>Actinomycetota</taxon>
        <taxon>Actinomycetes</taxon>
        <taxon>Mycobacteriales</taxon>
        <taxon>Mycobacteriaceae</taxon>
        <taxon>Mycobacterium</taxon>
    </lineage>
</organism>
<comment type="function">
    <text evidence="1">Exhibits S-adenosyl-L-methionine-dependent methyltransferase activity.</text>
</comment>
<comment type="similarity">
    <text evidence="2">Belongs to the UPF0677 family.</text>
</comment>
<keyword id="KW-0489">Methyltransferase</keyword>
<keyword id="KW-0949">S-adenosyl-L-methionine</keyword>
<keyword id="KW-0808">Transferase</keyword>
<dbReference type="EC" id="2.1.1.-"/>
<dbReference type="EMBL" id="CP000580">
    <property type="protein sequence ID" value="ABN95892.1"/>
    <property type="molecule type" value="Genomic_DNA"/>
</dbReference>
<dbReference type="SMR" id="A3PSL5"/>
<dbReference type="KEGG" id="mjl:Mjls_0079"/>
<dbReference type="HOGENOM" id="CLU_056160_2_0_11"/>
<dbReference type="BioCyc" id="MSP164757:G1G8C-84-MONOMER"/>
<dbReference type="GO" id="GO:0008168">
    <property type="term" value="F:methyltransferase activity"/>
    <property type="evidence" value="ECO:0007669"/>
    <property type="project" value="UniProtKB-KW"/>
</dbReference>
<dbReference type="GO" id="GO:0032259">
    <property type="term" value="P:methylation"/>
    <property type="evidence" value="ECO:0007669"/>
    <property type="project" value="UniProtKB-KW"/>
</dbReference>
<dbReference type="Gene3D" id="3.40.50.150">
    <property type="entry name" value="Vaccinia Virus protein VP39"/>
    <property type="match status" value="1"/>
</dbReference>
<dbReference type="InterPro" id="IPR007213">
    <property type="entry name" value="Ppm1/Ppm2/Tcmp"/>
</dbReference>
<dbReference type="InterPro" id="IPR029063">
    <property type="entry name" value="SAM-dependent_MTases_sf"/>
</dbReference>
<dbReference type="InterPro" id="IPR011610">
    <property type="entry name" value="SAM_mthyl_Trfase_ML2640-like"/>
</dbReference>
<dbReference type="NCBIfam" id="TIGR00027">
    <property type="entry name" value="mthyl_TIGR00027"/>
    <property type="match status" value="1"/>
</dbReference>
<dbReference type="PANTHER" id="PTHR43619">
    <property type="entry name" value="S-ADENOSYL-L-METHIONINE-DEPENDENT METHYLTRANSFERASE YKTD-RELATED"/>
    <property type="match status" value="1"/>
</dbReference>
<dbReference type="PANTHER" id="PTHR43619:SF2">
    <property type="entry name" value="S-ADENOSYL-L-METHIONINE-DEPENDENT METHYLTRANSFERASES SUPERFAMILY PROTEIN"/>
    <property type="match status" value="1"/>
</dbReference>
<dbReference type="Pfam" id="PF04072">
    <property type="entry name" value="LCM"/>
    <property type="match status" value="1"/>
</dbReference>
<dbReference type="SUPFAM" id="SSF53335">
    <property type="entry name" value="S-adenosyl-L-methionine-dependent methyltransferases"/>
    <property type="match status" value="1"/>
</dbReference>
<protein>
    <recommendedName>
        <fullName>Putative S-adenosyl-L-methionine-dependent methyltransferase Mjls_0079</fullName>
        <ecNumber>2.1.1.-</ecNumber>
    </recommendedName>
</protein>
<gene>
    <name type="ordered locus">Mjls_0079</name>
</gene>
<feature type="chain" id="PRO_0000361202" description="Putative S-adenosyl-L-methionine-dependent methyltransferase Mjls_0079">
    <location>
        <begin position="1"/>
        <end position="263"/>
    </location>
</feature>
<feature type="binding site" evidence="1">
    <location>
        <position position="121"/>
    </location>
    <ligand>
        <name>S-adenosyl-L-methionine</name>
        <dbReference type="ChEBI" id="CHEBI:59789"/>
    </ligand>
</feature>
<feature type="binding site" evidence="1">
    <location>
        <begin position="150"/>
        <end position="151"/>
    </location>
    <ligand>
        <name>S-adenosyl-L-methionine</name>
        <dbReference type="ChEBI" id="CHEBI:59789"/>
    </ligand>
</feature>
<evidence type="ECO:0000250" key="1"/>
<evidence type="ECO:0000305" key="2"/>